<protein>
    <recommendedName>
        <fullName evidence="1">Homoserine O-acetyltransferase</fullName>
        <shortName evidence="1">HAT</shortName>
        <ecNumber evidence="1">2.3.1.31</ecNumber>
    </recommendedName>
    <alternativeName>
        <fullName evidence="1">Homoserine transacetylase</fullName>
        <shortName evidence="1">HTA</shortName>
    </alternativeName>
</protein>
<reference key="1">
    <citation type="submission" date="2006-10" db="EMBL/GenBank/DDBJ databases">
        <authorList>
            <person name="Fleischmann R.D."/>
            <person name="Dodson R.J."/>
            <person name="Haft D.H."/>
            <person name="Merkel J.S."/>
            <person name="Nelson W.C."/>
            <person name="Fraser C.M."/>
        </authorList>
    </citation>
    <scope>NUCLEOTIDE SEQUENCE [LARGE SCALE GENOMIC DNA]</scope>
    <source>
        <strain>ATCC 700084 / mc(2)155</strain>
    </source>
</reference>
<reference key="2">
    <citation type="journal article" date="2007" name="Genome Biol.">
        <title>Interrupted coding sequences in Mycobacterium smegmatis: authentic mutations or sequencing errors?</title>
        <authorList>
            <person name="Deshayes C."/>
            <person name="Perrodou E."/>
            <person name="Gallien S."/>
            <person name="Euphrasie D."/>
            <person name="Schaeffer C."/>
            <person name="Van-Dorsselaer A."/>
            <person name="Poch O."/>
            <person name="Lecompte O."/>
            <person name="Reyrat J.-M."/>
        </authorList>
    </citation>
    <scope>NUCLEOTIDE SEQUENCE [LARGE SCALE GENOMIC DNA]</scope>
    <source>
        <strain>ATCC 700084 / mc(2)155</strain>
    </source>
</reference>
<reference key="3">
    <citation type="journal article" date="2009" name="Genome Res.">
        <title>Ortho-proteogenomics: multiple proteomes investigation through orthology and a new MS-based protocol.</title>
        <authorList>
            <person name="Gallien S."/>
            <person name="Perrodou E."/>
            <person name="Carapito C."/>
            <person name="Deshayes C."/>
            <person name="Reyrat J.-M."/>
            <person name="Van Dorsselaer A."/>
            <person name="Poch O."/>
            <person name="Schaeffer C."/>
            <person name="Lecompte O."/>
        </authorList>
    </citation>
    <scope>NUCLEOTIDE SEQUENCE [LARGE SCALE GENOMIC DNA]</scope>
    <source>
        <strain>ATCC 700084 / mc(2)155</strain>
    </source>
</reference>
<proteinExistence type="evidence at protein level"/>
<feature type="chain" id="PRO_1000021885" description="Homoserine O-acetyltransferase">
    <location>
        <begin position="1"/>
        <end position="380"/>
    </location>
</feature>
<feature type="domain" description="AB hydrolase-1" evidence="1">
    <location>
        <begin position="59"/>
        <end position="363"/>
    </location>
</feature>
<feature type="active site" description="Nucleophile" evidence="1">
    <location>
        <position position="164"/>
    </location>
</feature>
<feature type="active site" evidence="1">
    <location>
        <position position="327"/>
    </location>
</feature>
<feature type="active site" evidence="1">
    <location>
        <position position="357"/>
    </location>
</feature>
<feature type="binding site" evidence="1">
    <location>
        <position position="234"/>
    </location>
    <ligand>
        <name>substrate</name>
    </ligand>
</feature>
<feature type="binding site" evidence="1">
    <location>
        <position position="358"/>
    </location>
    <ligand>
        <name>substrate</name>
    </ligand>
</feature>
<feature type="strand" evidence="2">
    <location>
        <begin position="25"/>
        <end position="33"/>
    </location>
</feature>
<feature type="strand" evidence="2">
    <location>
        <begin position="39"/>
        <end position="51"/>
    </location>
</feature>
<feature type="strand" evidence="2">
    <location>
        <begin position="60"/>
        <end position="63"/>
    </location>
</feature>
<feature type="strand" evidence="2">
    <location>
        <begin position="81"/>
        <end position="83"/>
    </location>
</feature>
<feature type="turn" evidence="2">
    <location>
        <begin position="86"/>
        <end position="89"/>
    </location>
</feature>
<feature type="strand" evidence="2">
    <location>
        <begin position="90"/>
        <end position="92"/>
    </location>
</feature>
<feature type="strand" evidence="2">
    <location>
        <begin position="95"/>
        <end position="98"/>
    </location>
</feature>
<feature type="turn" evidence="2">
    <location>
        <begin position="99"/>
        <end position="101"/>
    </location>
</feature>
<feature type="strand" evidence="2">
    <location>
        <begin position="103"/>
        <end position="107"/>
    </location>
</feature>
<feature type="strand" evidence="2">
    <location>
        <begin position="113"/>
        <end position="116"/>
    </location>
</feature>
<feature type="strand" evidence="2">
    <location>
        <begin position="126"/>
        <end position="128"/>
    </location>
</feature>
<feature type="helix" evidence="2">
    <location>
        <begin position="130"/>
        <end position="132"/>
    </location>
</feature>
<feature type="helix" evidence="2">
    <location>
        <begin position="138"/>
        <end position="151"/>
    </location>
</feature>
<feature type="strand" evidence="2">
    <location>
        <begin position="157"/>
        <end position="163"/>
    </location>
</feature>
<feature type="helix" evidence="2">
    <location>
        <begin position="165"/>
        <end position="176"/>
    </location>
</feature>
<feature type="helix" evidence="2">
    <location>
        <begin position="178"/>
        <end position="180"/>
    </location>
</feature>
<feature type="strand" evidence="2">
    <location>
        <begin position="181"/>
        <end position="188"/>
    </location>
</feature>
<feature type="helix" evidence="2">
    <location>
        <begin position="195"/>
        <end position="210"/>
    </location>
</feature>
<feature type="helix" evidence="2">
    <location>
        <begin position="212"/>
        <end position="217"/>
    </location>
</feature>
<feature type="turn" evidence="2">
    <location>
        <begin position="220"/>
        <end position="223"/>
    </location>
</feature>
<feature type="helix" evidence="2">
    <location>
        <begin position="227"/>
        <end position="241"/>
    </location>
</feature>
<feature type="helix" evidence="2">
    <location>
        <begin position="244"/>
        <end position="251"/>
    </location>
</feature>
<feature type="helix" evidence="2">
    <location>
        <begin position="261"/>
        <end position="263"/>
    </location>
</feature>
<feature type="helix" evidence="2">
    <location>
        <begin position="268"/>
        <end position="281"/>
    </location>
</feature>
<feature type="helix" evidence="2">
    <location>
        <begin position="286"/>
        <end position="297"/>
    </location>
</feature>
<feature type="turn" evidence="2">
    <location>
        <begin position="301"/>
        <end position="306"/>
    </location>
</feature>
<feature type="helix" evidence="2">
    <location>
        <begin position="308"/>
        <end position="313"/>
    </location>
</feature>
<feature type="strand" evidence="2">
    <location>
        <begin position="319"/>
        <end position="324"/>
    </location>
</feature>
<feature type="strand" evidence="2">
    <location>
        <begin position="328"/>
        <end position="330"/>
    </location>
</feature>
<feature type="helix" evidence="2">
    <location>
        <begin position="332"/>
        <end position="341"/>
    </location>
</feature>
<feature type="strand" evidence="2">
    <location>
        <begin position="349"/>
        <end position="351"/>
    </location>
</feature>
<feature type="helix" evidence="2">
    <location>
        <begin position="356"/>
        <end position="358"/>
    </location>
</feature>
<feature type="helix" evidence="2">
    <location>
        <begin position="359"/>
        <end position="362"/>
    </location>
</feature>
<feature type="helix" evidence="2">
    <location>
        <begin position="364"/>
        <end position="378"/>
    </location>
</feature>
<organism>
    <name type="scientific">Mycolicibacterium smegmatis (strain ATCC 700084 / mc(2)155)</name>
    <name type="common">Mycobacterium smegmatis</name>
    <dbReference type="NCBI Taxonomy" id="246196"/>
    <lineage>
        <taxon>Bacteria</taxon>
        <taxon>Bacillati</taxon>
        <taxon>Actinomycetota</taxon>
        <taxon>Actinomycetes</taxon>
        <taxon>Mycobacteriales</taxon>
        <taxon>Mycobacteriaceae</taxon>
        <taxon>Mycolicibacterium</taxon>
    </lineage>
</organism>
<evidence type="ECO:0000255" key="1">
    <source>
        <dbReference type="HAMAP-Rule" id="MF_00296"/>
    </source>
</evidence>
<evidence type="ECO:0007829" key="2">
    <source>
        <dbReference type="PDB" id="6IOG"/>
    </source>
</evidence>
<sequence>MTIIEERATDTGMATVPLPAEGEIGLVHIGALTLENGTVLPDVTIAVQRWGELAPDRGNVVMVLHALTGDSHVTGPAGDGHPTAGWWDGVAGPGAPIDTDHWCAIATNVLGGCRGSTGPGSLAPDGKPWGSRFPQITIRDQVAADRAALAALGITEVAAVVGGSMGGARALEWLVTHPDDVRAGLVLAVGARATADQIGTQSTQVAAIKADPDWQGGDYHGTGRAPTEGMEIARRFAHLTYRGEEELDDRFANTPQDDEDPLTGGRYAVQSYLEYQGGKLARRFDPGTYVVLSDALSSHDVGRGRGGVEAALRSCPVPVVVGGITSDRLYPIRLQQELAELLPGCQGLDVVDSIYGHDGFLVETELVGKLIRRTLELAQR</sequence>
<accession>A0QSZ0</accession>
<accession>I7F941</accession>
<gene>
    <name evidence="1" type="primary">metXA</name>
    <name type="ordered locus">MSMEG_1651</name>
    <name type="ordered locus">MSMEI_1613</name>
</gene>
<keyword id="KW-0002">3D-structure</keyword>
<keyword id="KW-0012">Acyltransferase</keyword>
<keyword id="KW-0028">Amino-acid biosynthesis</keyword>
<keyword id="KW-0963">Cytoplasm</keyword>
<keyword id="KW-0486">Methionine biosynthesis</keyword>
<keyword id="KW-1185">Reference proteome</keyword>
<keyword id="KW-0808">Transferase</keyword>
<comment type="function">
    <text evidence="1">Transfers an acetyl group from acetyl-CoA to L-homoserine, forming acetyl-L-homoserine.</text>
</comment>
<comment type="catalytic activity">
    <reaction evidence="1">
        <text>L-homoserine + acetyl-CoA = O-acetyl-L-homoserine + CoA</text>
        <dbReference type="Rhea" id="RHEA:13701"/>
        <dbReference type="ChEBI" id="CHEBI:57287"/>
        <dbReference type="ChEBI" id="CHEBI:57288"/>
        <dbReference type="ChEBI" id="CHEBI:57476"/>
        <dbReference type="ChEBI" id="CHEBI:57716"/>
        <dbReference type="EC" id="2.3.1.31"/>
    </reaction>
</comment>
<comment type="pathway">
    <text evidence="1">Amino-acid biosynthesis; L-methionine biosynthesis via de novo pathway; O-acetyl-L-homoserine from L-homoserine: step 1/1.</text>
</comment>
<comment type="subunit">
    <text evidence="1">Homodimer.</text>
</comment>
<comment type="subcellular location">
    <subcellularLocation>
        <location evidence="1">Cytoplasm</location>
    </subcellularLocation>
</comment>
<comment type="similarity">
    <text evidence="1">Belongs to the AB hydrolase superfamily. MetX family.</text>
</comment>
<dbReference type="EC" id="2.3.1.31" evidence="1"/>
<dbReference type="EMBL" id="CP000480">
    <property type="protein sequence ID" value="ABK71400.1"/>
    <property type="molecule type" value="Genomic_DNA"/>
</dbReference>
<dbReference type="EMBL" id="CP001663">
    <property type="protein sequence ID" value="AFP38085.1"/>
    <property type="molecule type" value="Genomic_DNA"/>
</dbReference>
<dbReference type="RefSeq" id="YP_886028.1">
    <property type="nucleotide sequence ID" value="NC_008596.1"/>
</dbReference>
<dbReference type="PDB" id="6IOG">
    <property type="method" value="X-ray"/>
    <property type="resolution" value="1.55 A"/>
    <property type="chains" value="A/B=14-380"/>
</dbReference>
<dbReference type="PDB" id="6IOH">
    <property type="method" value="X-ray"/>
    <property type="resolution" value="2.00 A"/>
    <property type="chains" value="A/B=14-380"/>
</dbReference>
<dbReference type="PDB" id="6IOI">
    <property type="method" value="X-ray"/>
    <property type="resolution" value="1.60 A"/>
    <property type="chains" value="A/B=14-380"/>
</dbReference>
<dbReference type="PDBsum" id="6IOG"/>
<dbReference type="PDBsum" id="6IOH"/>
<dbReference type="PDBsum" id="6IOI"/>
<dbReference type="SMR" id="A0QSZ0"/>
<dbReference type="STRING" id="246196.MSMEG_1651"/>
<dbReference type="ESTHER" id="mycs2-metx">
    <property type="family name" value="Homoserine_transacetylase"/>
</dbReference>
<dbReference type="PaxDb" id="246196-MSMEI_1613"/>
<dbReference type="KEGG" id="msg:MSMEI_1613"/>
<dbReference type="KEGG" id="msm:MSMEG_1651"/>
<dbReference type="PATRIC" id="fig|246196.19.peg.1636"/>
<dbReference type="eggNOG" id="COG2021">
    <property type="taxonomic scope" value="Bacteria"/>
</dbReference>
<dbReference type="OrthoDB" id="9800754at2"/>
<dbReference type="UniPathway" id="UPA00051">
    <property type="reaction ID" value="UER00074"/>
</dbReference>
<dbReference type="Proteomes" id="UP000000757">
    <property type="component" value="Chromosome"/>
</dbReference>
<dbReference type="Proteomes" id="UP000006158">
    <property type="component" value="Chromosome"/>
</dbReference>
<dbReference type="GO" id="GO:0005737">
    <property type="term" value="C:cytoplasm"/>
    <property type="evidence" value="ECO:0007669"/>
    <property type="project" value="UniProtKB-SubCell"/>
</dbReference>
<dbReference type="GO" id="GO:0004414">
    <property type="term" value="F:homoserine O-acetyltransferase activity"/>
    <property type="evidence" value="ECO:0007669"/>
    <property type="project" value="UniProtKB-UniRule"/>
</dbReference>
<dbReference type="GO" id="GO:0009092">
    <property type="term" value="P:homoserine metabolic process"/>
    <property type="evidence" value="ECO:0007669"/>
    <property type="project" value="TreeGrafter"/>
</dbReference>
<dbReference type="GO" id="GO:0009086">
    <property type="term" value="P:methionine biosynthetic process"/>
    <property type="evidence" value="ECO:0007669"/>
    <property type="project" value="UniProtKB-UniRule"/>
</dbReference>
<dbReference type="Gene3D" id="3.40.50.1820">
    <property type="entry name" value="alpha/beta hydrolase"/>
    <property type="match status" value="1"/>
</dbReference>
<dbReference type="HAMAP" id="MF_00296">
    <property type="entry name" value="MetX_acyltransf"/>
    <property type="match status" value="1"/>
</dbReference>
<dbReference type="InterPro" id="IPR000073">
    <property type="entry name" value="AB_hydrolase_1"/>
</dbReference>
<dbReference type="InterPro" id="IPR029058">
    <property type="entry name" value="AB_hydrolase_fold"/>
</dbReference>
<dbReference type="InterPro" id="IPR008220">
    <property type="entry name" value="HAT_MetX-like"/>
</dbReference>
<dbReference type="NCBIfam" id="TIGR01392">
    <property type="entry name" value="homoserO_Ac_trn"/>
    <property type="match status" value="1"/>
</dbReference>
<dbReference type="NCBIfam" id="NF001209">
    <property type="entry name" value="PRK00175.1"/>
    <property type="match status" value="1"/>
</dbReference>
<dbReference type="PANTHER" id="PTHR32268">
    <property type="entry name" value="HOMOSERINE O-ACETYLTRANSFERASE"/>
    <property type="match status" value="1"/>
</dbReference>
<dbReference type="PANTHER" id="PTHR32268:SF11">
    <property type="entry name" value="HOMOSERINE O-ACETYLTRANSFERASE"/>
    <property type="match status" value="1"/>
</dbReference>
<dbReference type="Pfam" id="PF00561">
    <property type="entry name" value="Abhydrolase_1"/>
    <property type="match status" value="1"/>
</dbReference>
<dbReference type="PIRSF" id="PIRSF000443">
    <property type="entry name" value="Homoser_Ac_trans"/>
    <property type="match status" value="1"/>
</dbReference>
<dbReference type="SUPFAM" id="SSF53474">
    <property type="entry name" value="alpha/beta-Hydrolases"/>
    <property type="match status" value="1"/>
</dbReference>
<name>METXA_MYCS2</name>